<protein>
    <recommendedName>
        <fullName evidence="1">ATP-dependent protease subunit HslV</fullName>
        <ecNumber evidence="1">3.4.25.2</ecNumber>
    </recommendedName>
</protein>
<name>HSLV_BACC1</name>
<evidence type="ECO:0000255" key="1">
    <source>
        <dbReference type="HAMAP-Rule" id="MF_00248"/>
    </source>
</evidence>
<reference key="1">
    <citation type="journal article" date="2004" name="Nucleic Acids Res.">
        <title>The genome sequence of Bacillus cereus ATCC 10987 reveals metabolic adaptations and a large plasmid related to Bacillus anthracis pXO1.</title>
        <authorList>
            <person name="Rasko D.A."/>
            <person name="Ravel J."/>
            <person name="Oekstad O.A."/>
            <person name="Helgason E."/>
            <person name="Cer R.Z."/>
            <person name="Jiang L."/>
            <person name="Shores K.A."/>
            <person name="Fouts D.E."/>
            <person name="Tourasse N.J."/>
            <person name="Angiuoli S.V."/>
            <person name="Kolonay J.F."/>
            <person name="Nelson W.C."/>
            <person name="Kolstoe A.-B."/>
            <person name="Fraser C.M."/>
            <person name="Read T.D."/>
        </authorList>
    </citation>
    <scope>NUCLEOTIDE SEQUENCE [LARGE SCALE GENOMIC DNA]</scope>
    <source>
        <strain>ATCC 10987 / NRS 248</strain>
    </source>
</reference>
<feature type="chain" id="PRO_0000148078" description="ATP-dependent protease subunit HslV">
    <location>
        <begin position="1"/>
        <end position="180"/>
    </location>
</feature>
<feature type="active site" evidence="1">
    <location>
        <position position="7"/>
    </location>
</feature>
<feature type="binding site" evidence="1">
    <location>
        <position position="165"/>
    </location>
    <ligand>
        <name>Na(+)</name>
        <dbReference type="ChEBI" id="CHEBI:29101"/>
    </ligand>
</feature>
<feature type="binding site" evidence="1">
    <location>
        <position position="168"/>
    </location>
    <ligand>
        <name>Na(+)</name>
        <dbReference type="ChEBI" id="CHEBI:29101"/>
    </ligand>
</feature>
<feature type="binding site" evidence="1">
    <location>
        <position position="171"/>
    </location>
    <ligand>
        <name>Na(+)</name>
        <dbReference type="ChEBI" id="CHEBI:29101"/>
    </ligand>
</feature>
<proteinExistence type="inferred from homology"/>
<keyword id="KW-0021">Allosteric enzyme</keyword>
<keyword id="KW-0963">Cytoplasm</keyword>
<keyword id="KW-0378">Hydrolase</keyword>
<keyword id="KW-0479">Metal-binding</keyword>
<keyword id="KW-0645">Protease</keyword>
<keyword id="KW-0915">Sodium</keyword>
<keyword id="KW-0888">Threonine protease</keyword>
<comment type="function">
    <text evidence="1">Protease subunit of a proteasome-like degradation complex believed to be a general protein degrading machinery.</text>
</comment>
<comment type="catalytic activity">
    <reaction evidence="1">
        <text>ATP-dependent cleavage of peptide bonds with broad specificity.</text>
        <dbReference type="EC" id="3.4.25.2"/>
    </reaction>
</comment>
<comment type="activity regulation">
    <text evidence="1">Allosterically activated by HslU binding.</text>
</comment>
<comment type="subunit">
    <text evidence="1">A double ring-shaped homohexamer of HslV is capped on each side by a ring-shaped HslU homohexamer. The assembly of the HslU/HslV complex is dependent on binding of ATP.</text>
</comment>
<comment type="subcellular location">
    <subcellularLocation>
        <location evidence="1">Cytoplasm</location>
    </subcellularLocation>
</comment>
<comment type="similarity">
    <text evidence="1">Belongs to the peptidase T1B family. HslV subfamily.</text>
</comment>
<accession>P61476</accession>
<sequence>MGNFHATTIFAVHHNGECAMAGDGQVTMGNAVVMKHTARKVRKLFQGKVLAGFAGSVADAFTLFEMFEGKLEEYNGNLQRAAVEMAKQWRGDKMLRQLEAMLIVMDKTTMLLVSGTGEVIEPDDGILAIGSGGNYALSAGRALKQYASEHLTAKQIAKASLDIAGDICVYTNHNIIVEEL</sequence>
<gene>
    <name evidence="1" type="primary">hslV</name>
    <name type="ordered locus">BCE_3872</name>
</gene>
<dbReference type="EC" id="3.4.25.2" evidence="1"/>
<dbReference type="EMBL" id="AE017194">
    <property type="protein sequence ID" value="AAS42777.1"/>
    <property type="molecule type" value="Genomic_DNA"/>
</dbReference>
<dbReference type="SMR" id="P61476"/>
<dbReference type="MEROPS" id="T01.007"/>
<dbReference type="KEGG" id="bca:BCE_3872"/>
<dbReference type="HOGENOM" id="CLU_093872_1_0_9"/>
<dbReference type="Proteomes" id="UP000002527">
    <property type="component" value="Chromosome"/>
</dbReference>
<dbReference type="GO" id="GO:0009376">
    <property type="term" value="C:HslUV protease complex"/>
    <property type="evidence" value="ECO:0007669"/>
    <property type="project" value="UniProtKB-UniRule"/>
</dbReference>
<dbReference type="GO" id="GO:0005839">
    <property type="term" value="C:proteasome core complex"/>
    <property type="evidence" value="ECO:0007669"/>
    <property type="project" value="InterPro"/>
</dbReference>
<dbReference type="GO" id="GO:0046872">
    <property type="term" value="F:metal ion binding"/>
    <property type="evidence" value="ECO:0007669"/>
    <property type="project" value="UniProtKB-KW"/>
</dbReference>
<dbReference type="GO" id="GO:0004298">
    <property type="term" value="F:threonine-type endopeptidase activity"/>
    <property type="evidence" value="ECO:0007669"/>
    <property type="project" value="UniProtKB-KW"/>
</dbReference>
<dbReference type="GO" id="GO:0051603">
    <property type="term" value="P:proteolysis involved in protein catabolic process"/>
    <property type="evidence" value="ECO:0007669"/>
    <property type="project" value="InterPro"/>
</dbReference>
<dbReference type="CDD" id="cd01913">
    <property type="entry name" value="protease_HslV"/>
    <property type="match status" value="1"/>
</dbReference>
<dbReference type="Gene3D" id="3.60.20.10">
    <property type="entry name" value="Glutamine Phosphoribosylpyrophosphate, subunit 1, domain 1"/>
    <property type="match status" value="1"/>
</dbReference>
<dbReference type="HAMAP" id="MF_00248">
    <property type="entry name" value="HslV"/>
    <property type="match status" value="1"/>
</dbReference>
<dbReference type="InterPro" id="IPR022281">
    <property type="entry name" value="ATP-dep_Prtase_HsIV_su"/>
</dbReference>
<dbReference type="InterPro" id="IPR029055">
    <property type="entry name" value="Ntn_hydrolases_N"/>
</dbReference>
<dbReference type="InterPro" id="IPR001353">
    <property type="entry name" value="Proteasome_sua/b"/>
</dbReference>
<dbReference type="InterPro" id="IPR023333">
    <property type="entry name" value="Proteasome_suB-type"/>
</dbReference>
<dbReference type="NCBIfam" id="TIGR03692">
    <property type="entry name" value="ATP_dep_HslV"/>
    <property type="match status" value="1"/>
</dbReference>
<dbReference type="NCBIfam" id="NF003964">
    <property type="entry name" value="PRK05456.1"/>
    <property type="match status" value="1"/>
</dbReference>
<dbReference type="PANTHER" id="PTHR32194:SF0">
    <property type="entry name" value="ATP-DEPENDENT PROTEASE SUBUNIT HSLV"/>
    <property type="match status" value="1"/>
</dbReference>
<dbReference type="PANTHER" id="PTHR32194">
    <property type="entry name" value="METALLOPROTEASE TLDD"/>
    <property type="match status" value="1"/>
</dbReference>
<dbReference type="Pfam" id="PF00227">
    <property type="entry name" value="Proteasome"/>
    <property type="match status" value="1"/>
</dbReference>
<dbReference type="PIRSF" id="PIRSF039093">
    <property type="entry name" value="HslV"/>
    <property type="match status" value="1"/>
</dbReference>
<dbReference type="SUPFAM" id="SSF56235">
    <property type="entry name" value="N-terminal nucleophile aminohydrolases (Ntn hydrolases)"/>
    <property type="match status" value="1"/>
</dbReference>
<dbReference type="PROSITE" id="PS51476">
    <property type="entry name" value="PROTEASOME_BETA_2"/>
    <property type="match status" value="1"/>
</dbReference>
<organism>
    <name type="scientific">Bacillus cereus (strain ATCC 10987 / NRS 248)</name>
    <dbReference type="NCBI Taxonomy" id="222523"/>
    <lineage>
        <taxon>Bacteria</taxon>
        <taxon>Bacillati</taxon>
        <taxon>Bacillota</taxon>
        <taxon>Bacilli</taxon>
        <taxon>Bacillales</taxon>
        <taxon>Bacillaceae</taxon>
        <taxon>Bacillus</taxon>
        <taxon>Bacillus cereus group</taxon>
    </lineage>
</organism>